<organism>
    <name type="scientific">Saccharomyces cerevisiae (strain ATCC 204508 / S288c)</name>
    <name type="common">Baker's yeast</name>
    <dbReference type="NCBI Taxonomy" id="559292"/>
    <lineage>
        <taxon>Eukaryota</taxon>
        <taxon>Fungi</taxon>
        <taxon>Dikarya</taxon>
        <taxon>Ascomycota</taxon>
        <taxon>Saccharomycotina</taxon>
        <taxon>Saccharomycetes</taxon>
        <taxon>Saccharomycetales</taxon>
        <taxon>Saccharomycetaceae</taxon>
        <taxon>Saccharomyces</taxon>
    </lineage>
</organism>
<proteinExistence type="evidence at protein level"/>
<name>SYH_YEAST</name>
<protein>
    <recommendedName>
        <fullName>Histidine--tRNA ligase, mitochondrial</fullName>
        <ecNumber>6.1.1.21</ecNumber>
    </recommendedName>
    <alternativeName>
        <fullName>Histidyl-tRNA synthetase</fullName>
        <shortName>HisRS</shortName>
    </alternativeName>
</protein>
<sequence>MLSRSLNKVVTSIKSSSIIRMSSATAAATSAPTANAANALKASKAPKKGKLQVSLKTPKGTKDWADSDMVIREAIFSTLSGLFKKHGGVTIDTPVFELREILAGKYGEDSKLIYNLEDQGGELCSLRYDLTVPFARYVAMNNIQSIKRYHIAKVYRRDQPAMTKGRMREFYQCDFDVAGTFESMVPDSECLSILVEGLTSLGIKDFKIKLNHRKILDGIFQIAGVKDEDVRKISSAVDKLDKSPWEAVKKEMTEEKGQSEETADKIGEYVKLNGSLKEIHAVLSADANITSNEKAKQGLDDIATLMKYTEAFDIDSFISFDLSLARGLDYYTGLIYEVVTSASAPPENASELKKKAKSAEDASEFVGVGSIAAGGRYDNLVNMFSEASGKKSTQIPCVGISFGVERIFSLIKQRINSSTTIKPTATQVFVMAFGGGKDWTGYLPERMKVTKQLWDAGIEAEYVYKAKANPRKQFDAAEKAGCHIAVILGKEEYLEGKLRVKRLGQEFADDDGELVSAADIVPIVQEKLSQIHEDGLNEVTRLIKGL</sequence>
<accession>P07263</accession>
<accession>D6W443</accession>
<accession>Q12095</accession>
<feature type="transit peptide" description="Mitochondrion">
    <location>
        <begin position="1"/>
        <end position="20"/>
    </location>
</feature>
<feature type="chain" id="PRO_0000035804" description="Histidine--tRNA ligase, mitochondrial">
    <location>
        <begin position="21"/>
        <end position="546"/>
    </location>
</feature>
<feature type="binding site" evidence="1">
    <location>
        <begin position="129"/>
        <end position="131"/>
    </location>
    <ligand>
        <name>L-histidine</name>
        <dbReference type="ChEBI" id="CHEBI:57595"/>
    </ligand>
</feature>
<feature type="binding site" evidence="1">
    <location>
        <position position="156"/>
    </location>
    <ligand>
        <name>L-histidine</name>
        <dbReference type="ChEBI" id="CHEBI:57595"/>
    </ligand>
</feature>
<feature type="binding site" evidence="1">
    <location>
        <position position="172"/>
    </location>
    <ligand>
        <name>L-histidine</name>
        <dbReference type="ChEBI" id="CHEBI:57595"/>
    </ligand>
</feature>
<feature type="binding site" evidence="1">
    <location>
        <position position="176"/>
    </location>
    <ligand>
        <name>L-histidine</name>
        <dbReference type="ChEBI" id="CHEBI:57595"/>
    </ligand>
</feature>
<feature type="binding site" evidence="1">
    <location>
        <position position="326"/>
    </location>
    <ligand>
        <name>L-histidine</name>
        <dbReference type="ChEBI" id="CHEBI:57595"/>
    </ligand>
</feature>
<feature type="binding site" evidence="1">
    <location>
        <begin position="330"/>
        <end position="331"/>
    </location>
    <ligand>
        <name>L-histidine</name>
        <dbReference type="ChEBI" id="CHEBI:57595"/>
    </ligand>
</feature>
<feature type="splice variant" id="VSP_018907" description="In isoform Cytoplasmic." evidence="6">
    <location>
        <begin position="1"/>
        <end position="20"/>
    </location>
</feature>
<feature type="mutagenesis site" description="Does not rescue the lethal phenotype of the deletion mutant." evidence="4">
    <location>
        <begin position="198"/>
        <end position="207"/>
    </location>
</feature>
<feature type="mutagenesis site" description="Rescues the lethal phenotype of the deletion mutant." evidence="4">
    <original>L</original>
    <variation>V</variation>
    <location>
        <position position="198"/>
    </location>
</feature>
<feature type="mutagenesis site" description="Partially rescues the lethal phenotype of the deletion mutant." evidence="4">
    <original>V</original>
    <variation>L</variation>
    <location>
        <position position="381"/>
    </location>
</feature>
<feature type="sequence conflict" description="In Ref. 1; AAA34695/AAA34696." evidence="6" ref="1">
    <original>AAE</original>
    <variation>TTK</variation>
    <location>
        <begin position="476"/>
        <end position="478"/>
    </location>
</feature>
<reference key="1">
    <citation type="journal article" date="1986" name="Cell">
        <title>The HTS1 gene encodes both the cytoplasmic and mitochondrial histidine tRNA synthetases of S. cerevisiae.</title>
        <authorList>
            <person name="Natsoulis G."/>
            <person name="Hilger F."/>
            <person name="Fink G.R."/>
        </authorList>
    </citation>
    <scope>NUCLEOTIDE SEQUENCE [GENOMIC DNA]</scope>
    <scope>FUNCTION</scope>
    <scope>ALTERNATIVE INITIATION</scope>
</reference>
<reference key="2">
    <citation type="journal article" date="1997" name="Nature">
        <title>The nucleotide sequence of Saccharomyces cerevisiae chromosome XVI.</title>
        <authorList>
            <person name="Bussey H."/>
            <person name="Storms R.K."/>
            <person name="Ahmed A."/>
            <person name="Albermann K."/>
            <person name="Allen E."/>
            <person name="Ansorge W."/>
            <person name="Araujo R."/>
            <person name="Aparicio A."/>
            <person name="Barrell B.G."/>
            <person name="Badcock K."/>
            <person name="Benes V."/>
            <person name="Botstein D."/>
            <person name="Bowman S."/>
            <person name="Brueckner M."/>
            <person name="Carpenter J."/>
            <person name="Cherry J.M."/>
            <person name="Chung E."/>
            <person name="Churcher C.M."/>
            <person name="Coster F."/>
            <person name="Davis K."/>
            <person name="Davis R.W."/>
            <person name="Dietrich F.S."/>
            <person name="Delius H."/>
            <person name="DiPaolo T."/>
            <person name="Dubois E."/>
            <person name="Duesterhoeft A."/>
            <person name="Duncan M."/>
            <person name="Floeth M."/>
            <person name="Fortin N."/>
            <person name="Friesen J.D."/>
            <person name="Fritz C."/>
            <person name="Goffeau A."/>
            <person name="Hall J."/>
            <person name="Hebling U."/>
            <person name="Heumann K."/>
            <person name="Hilbert H."/>
            <person name="Hillier L.W."/>
            <person name="Hunicke-Smith S."/>
            <person name="Hyman R.W."/>
            <person name="Johnston M."/>
            <person name="Kalman S."/>
            <person name="Kleine K."/>
            <person name="Komp C."/>
            <person name="Kurdi O."/>
            <person name="Lashkari D."/>
            <person name="Lew H."/>
            <person name="Lin A."/>
            <person name="Lin D."/>
            <person name="Louis E.J."/>
            <person name="Marathe R."/>
            <person name="Messenguy F."/>
            <person name="Mewes H.-W."/>
            <person name="Mirtipati S."/>
            <person name="Moestl D."/>
            <person name="Mueller-Auer S."/>
            <person name="Namath A."/>
            <person name="Nentwich U."/>
            <person name="Oefner P."/>
            <person name="Pearson D."/>
            <person name="Petel F.X."/>
            <person name="Pohl T.M."/>
            <person name="Purnelle B."/>
            <person name="Rajandream M.A."/>
            <person name="Rechmann S."/>
            <person name="Rieger M."/>
            <person name="Riles L."/>
            <person name="Roberts D."/>
            <person name="Schaefer M."/>
            <person name="Scharfe M."/>
            <person name="Scherens B."/>
            <person name="Schramm S."/>
            <person name="Schroeder M."/>
            <person name="Sdicu A.-M."/>
            <person name="Tettelin H."/>
            <person name="Urrestarazu L.A."/>
            <person name="Ushinsky S."/>
            <person name="Vierendeels F."/>
            <person name="Vissers S."/>
            <person name="Voss H."/>
            <person name="Walsh S.V."/>
            <person name="Wambutt R."/>
            <person name="Wang Y."/>
            <person name="Wedler E."/>
            <person name="Wedler H."/>
            <person name="Winnett E."/>
            <person name="Zhong W.-W."/>
            <person name="Zollner A."/>
            <person name="Vo D.H."/>
            <person name="Hani J."/>
        </authorList>
    </citation>
    <scope>NUCLEOTIDE SEQUENCE [LARGE SCALE GENOMIC DNA]</scope>
    <source>
        <strain>ATCC 204508 / S288c</strain>
    </source>
</reference>
<reference key="3">
    <citation type="journal article" date="2014" name="G3 (Bethesda)">
        <title>The reference genome sequence of Saccharomyces cerevisiae: Then and now.</title>
        <authorList>
            <person name="Engel S.R."/>
            <person name="Dietrich F.S."/>
            <person name="Fisk D.G."/>
            <person name="Binkley G."/>
            <person name="Balakrishnan R."/>
            <person name="Costanzo M.C."/>
            <person name="Dwight S.S."/>
            <person name="Hitz B.C."/>
            <person name="Karra K."/>
            <person name="Nash R.S."/>
            <person name="Weng S."/>
            <person name="Wong E.D."/>
            <person name="Lloyd P."/>
            <person name="Skrzypek M.S."/>
            <person name="Miyasato S.R."/>
            <person name="Simison M."/>
            <person name="Cherry J.M."/>
        </authorList>
    </citation>
    <scope>GENOME REANNOTATION</scope>
    <source>
        <strain>ATCC 204508 / S288c</strain>
    </source>
</reference>
<reference key="4">
    <citation type="journal article" date="2007" name="Genome Res.">
        <title>Approaching a complete repository of sequence-verified protein-encoding clones for Saccharomyces cerevisiae.</title>
        <authorList>
            <person name="Hu Y."/>
            <person name="Rolfs A."/>
            <person name="Bhullar B."/>
            <person name="Murthy T.V.S."/>
            <person name="Zhu C."/>
            <person name="Berger M.F."/>
            <person name="Camargo A.A."/>
            <person name="Kelley F."/>
            <person name="McCarron S."/>
            <person name="Jepson D."/>
            <person name="Richardson A."/>
            <person name="Raphael J."/>
            <person name="Moreira D."/>
            <person name="Taycher E."/>
            <person name="Zuo D."/>
            <person name="Mohr S."/>
            <person name="Kane M.F."/>
            <person name="Williamson J."/>
            <person name="Simpson A.J.G."/>
            <person name="Bulyk M.L."/>
            <person name="Harlow E."/>
            <person name="Marsischky G."/>
            <person name="Kolodner R.D."/>
            <person name="LaBaer J."/>
        </authorList>
    </citation>
    <scope>NUCLEOTIDE SEQUENCE [GENOMIC DNA]</scope>
    <source>
        <strain>ATCC 204508 / S288c</strain>
    </source>
</reference>
<reference key="5">
    <citation type="journal article" date="1992" name="Genetics">
        <title>HTS1 encodes both the cytoplasmic and mitochondrial histidyl-tRNA synthetase of Saccharomyces cerevisiae: mutations alter the specificity of compartmentation.</title>
        <authorList>
            <person name="Chiu M.I."/>
            <person name="Mason T.L."/>
            <person name="Fink G.R."/>
        </authorList>
    </citation>
    <scope>FUNCTION</scope>
    <scope>ALTERNATIVE INITIATION</scope>
    <scope>SUBCELLULAR LOCATION</scope>
</reference>
<reference key="6">
    <citation type="journal article" date="2003" name="Nature">
        <title>Global analysis of protein localization in budding yeast.</title>
        <authorList>
            <person name="Huh W.-K."/>
            <person name="Falvo J.V."/>
            <person name="Gerke L.C."/>
            <person name="Carroll A.S."/>
            <person name="Howson R.W."/>
            <person name="Weissman J.S."/>
            <person name="O'Shea E.K."/>
        </authorList>
    </citation>
    <scope>SUBCELLULAR LOCATION [LARGE SCALE ANALYSIS]</scope>
</reference>
<reference key="7">
    <citation type="journal article" date="2003" name="Nature">
        <title>Global analysis of protein expression in yeast.</title>
        <authorList>
            <person name="Ghaemmaghami S."/>
            <person name="Huh W.-K."/>
            <person name="Bower K."/>
            <person name="Howson R.W."/>
            <person name="Belle A."/>
            <person name="Dephoure N."/>
            <person name="O'Shea E.K."/>
            <person name="Weissman J.S."/>
        </authorList>
    </citation>
    <scope>LEVEL OF PROTEIN EXPRESSION [LARGE SCALE ANALYSIS]</scope>
</reference>
<reference key="8">
    <citation type="journal article" date="2011" name="Proc. Natl. Acad. Sci. U.S.A.">
        <title>Mutations in mitochondrial histidyl tRNA synthetase HARS2 cause ovarian dysgenesis and sensorineural hearing loss of Perrault syndrome.</title>
        <authorList>
            <person name="Pierce S.B."/>
            <person name="Chisholm K.M."/>
            <person name="Lynch E.D."/>
            <person name="Lee M.K."/>
            <person name="Walsh T."/>
            <person name="Opitz J.M."/>
            <person name="Li W."/>
            <person name="Klevit R.E."/>
            <person name="King M.C."/>
        </authorList>
    </citation>
    <scope>DISRUPTION PHENOTYPE</scope>
    <scope>MUTAGENESIS OF 198-LEU--LYS-207; LEU-198 AND VAL-381</scope>
</reference>
<gene>
    <name type="primary">HTS1</name>
    <name type="ordered locus">YPR033C</name>
    <name type="ORF">YP9367.13C</name>
</gene>
<evidence type="ECO:0000250" key="1">
    <source>
        <dbReference type="UniProtKB" id="P12081"/>
    </source>
</evidence>
<evidence type="ECO:0000269" key="2">
    <source>
    </source>
</evidence>
<evidence type="ECO:0000269" key="3">
    <source>
    </source>
</evidence>
<evidence type="ECO:0000269" key="4">
    <source>
    </source>
</evidence>
<evidence type="ECO:0000269" key="5">
    <source>
    </source>
</evidence>
<evidence type="ECO:0000305" key="6"/>
<dbReference type="EC" id="6.1.1.21"/>
<dbReference type="EMBL" id="M14048">
    <property type="protein sequence ID" value="AAA34695.1"/>
    <property type="molecule type" value="Genomic_DNA"/>
</dbReference>
<dbReference type="EMBL" id="M14048">
    <property type="protein sequence ID" value="AAA34696.1"/>
    <property type="molecule type" value="Genomic_DNA"/>
</dbReference>
<dbReference type="EMBL" id="Z71255">
    <property type="protein sequence ID" value="CAA94983.1"/>
    <property type="molecule type" value="Genomic_DNA"/>
</dbReference>
<dbReference type="EMBL" id="Z49274">
    <property type="protein sequence ID" value="CAA89287.1"/>
    <property type="molecule type" value="Genomic_DNA"/>
</dbReference>
<dbReference type="EMBL" id="AY692751">
    <property type="protein sequence ID" value="AAT92770.1"/>
    <property type="molecule type" value="Genomic_DNA"/>
</dbReference>
<dbReference type="EMBL" id="BK006949">
    <property type="protein sequence ID" value="DAA11459.1"/>
    <property type="molecule type" value="Genomic_DNA"/>
</dbReference>
<dbReference type="PIR" id="S54507">
    <property type="entry name" value="SYBYHM"/>
</dbReference>
<dbReference type="RefSeq" id="NP_015358.1">
    <molecule id="P07263-1"/>
    <property type="nucleotide sequence ID" value="NM_001184130.1"/>
</dbReference>
<dbReference type="SMR" id="P07263"/>
<dbReference type="BioGRID" id="36211">
    <property type="interactions" value="191"/>
</dbReference>
<dbReference type="DIP" id="DIP-3909N"/>
<dbReference type="FunCoup" id="P07263">
    <property type="interactions" value="1008"/>
</dbReference>
<dbReference type="IntAct" id="P07263">
    <property type="interactions" value="46"/>
</dbReference>
<dbReference type="MINT" id="P07263"/>
<dbReference type="STRING" id="4932.YPR033C"/>
<dbReference type="iPTMnet" id="P07263"/>
<dbReference type="PaxDb" id="4932-YPR033C"/>
<dbReference type="PeptideAtlas" id="P07263"/>
<dbReference type="EnsemblFungi" id="YPR033C_mRNA">
    <molecule id="P07263-1"/>
    <property type="protein sequence ID" value="YPR033C"/>
    <property type="gene ID" value="YPR033C"/>
</dbReference>
<dbReference type="GeneID" id="856145"/>
<dbReference type="KEGG" id="sce:YPR033C"/>
<dbReference type="AGR" id="SGD:S000006237"/>
<dbReference type="SGD" id="S000006237">
    <property type="gene designation" value="HTS1"/>
</dbReference>
<dbReference type="VEuPathDB" id="FungiDB:YPR033C"/>
<dbReference type="eggNOG" id="KOG1936">
    <property type="taxonomic scope" value="Eukaryota"/>
</dbReference>
<dbReference type="GeneTree" id="ENSGT00390000005922"/>
<dbReference type="HOGENOM" id="CLU_025113_4_0_1"/>
<dbReference type="InParanoid" id="P07263"/>
<dbReference type="OMA" id="CGGGNFK"/>
<dbReference type="OrthoDB" id="1906957at2759"/>
<dbReference type="BioCyc" id="YEAST:G3O-34192-MONOMER"/>
<dbReference type="BRENDA" id="6.1.1.21">
    <property type="organism ID" value="984"/>
</dbReference>
<dbReference type="BioGRID-ORCS" id="856145">
    <property type="hits" value="7 hits in 10 CRISPR screens"/>
</dbReference>
<dbReference type="PRO" id="PR:P07263"/>
<dbReference type="Proteomes" id="UP000002311">
    <property type="component" value="Chromosome XVI"/>
</dbReference>
<dbReference type="RNAct" id="P07263">
    <property type="molecule type" value="protein"/>
</dbReference>
<dbReference type="GO" id="GO:0005737">
    <property type="term" value="C:cytoplasm"/>
    <property type="evidence" value="ECO:0000315"/>
    <property type="project" value="SGD"/>
</dbReference>
<dbReference type="GO" id="GO:0005829">
    <property type="term" value="C:cytosol"/>
    <property type="evidence" value="ECO:0000318"/>
    <property type="project" value="GO_Central"/>
</dbReference>
<dbReference type="GO" id="GO:0005739">
    <property type="term" value="C:mitochondrion"/>
    <property type="evidence" value="ECO:0000315"/>
    <property type="project" value="SGD"/>
</dbReference>
<dbReference type="GO" id="GO:0004812">
    <property type="term" value="F:aminoacyl-tRNA ligase activity"/>
    <property type="evidence" value="ECO:0000314"/>
    <property type="project" value="SGD"/>
</dbReference>
<dbReference type="GO" id="GO:0005524">
    <property type="term" value="F:ATP binding"/>
    <property type="evidence" value="ECO:0007669"/>
    <property type="project" value="UniProtKB-KW"/>
</dbReference>
<dbReference type="GO" id="GO:0004821">
    <property type="term" value="F:histidine-tRNA ligase activity"/>
    <property type="evidence" value="ECO:0000318"/>
    <property type="project" value="GO_Central"/>
</dbReference>
<dbReference type="GO" id="GO:0003729">
    <property type="term" value="F:mRNA binding"/>
    <property type="evidence" value="ECO:0007005"/>
    <property type="project" value="SGD"/>
</dbReference>
<dbReference type="GO" id="GO:0003723">
    <property type="term" value="F:RNA binding"/>
    <property type="evidence" value="ECO:0000318"/>
    <property type="project" value="GO_Central"/>
</dbReference>
<dbReference type="GO" id="GO:1990825">
    <property type="term" value="F:sequence-specific mRNA binding"/>
    <property type="evidence" value="ECO:0000314"/>
    <property type="project" value="SGD"/>
</dbReference>
<dbReference type="GO" id="GO:0006427">
    <property type="term" value="P:histidyl-tRNA aminoacylation"/>
    <property type="evidence" value="ECO:0000314"/>
    <property type="project" value="SGD"/>
</dbReference>
<dbReference type="GO" id="GO:0032543">
    <property type="term" value="P:mitochondrial translation"/>
    <property type="evidence" value="ECO:0000316"/>
    <property type="project" value="SGD"/>
</dbReference>
<dbReference type="CDD" id="cd00773">
    <property type="entry name" value="HisRS-like_core"/>
    <property type="match status" value="1"/>
</dbReference>
<dbReference type="CDD" id="cd00859">
    <property type="entry name" value="HisRS_anticodon"/>
    <property type="match status" value="1"/>
</dbReference>
<dbReference type="FunFam" id="3.40.50.800:FF:000015">
    <property type="entry name" value="Histidyl-tRNA synthetase, mitochondrial"/>
    <property type="match status" value="1"/>
</dbReference>
<dbReference type="FunFam" id="3.30.930.10:FF:000021">
    <property type="entry name" value="Probable histidine--tRNA ligase, mitochondrial"/>
    <property type="match status" value="1"/>
</dbReference>
<dbReference type="Gene3D" id="3.40.50.800">
    <property type="entry name" value="Anticodon-binding domain"/>
    <property type="match status" value="1"/>
</dbReference>
<dbReference type="Gene3D" id="3.30.930.10">
    <property type="entry name" value="Bira Bifunctional Protein, Domain 2"/>
    <property type="match status" value="1"/>
</dbReference>
<dbReference type="InterPro" id="IPR006195">
    <property type="entry name" value="aa-tRNA-synth_II"/>
</dbReference>
<dbReference type="InterPro" id="IPR045864">
    <property type="entry name" value="aa-tRNA-synth_II/BPL/LPL"/>
</dbReference>
<dbReference type="InterPro" id="IPR004154">
    <property type="entry name" value="Anticodon-bd"/>
</dbReference>
<dbReference type="InterPro" id="IPR036621">
    <property type="entry name" value="Anticodon-bd_dom_sf"/>
</dbReference>
<dbReference type="InterPro" id="IPR015807">
    <property type="entry name" value="His-tRNA-ligase"/>
</dbReference>
<dbReference type="InterPro" id="IPR041715">
    <property type="entry name" value="HisRS-like_core"/>
</dbReference>
<dbReference type="InterPro" id="IPR004516">
    <property type="entry name" value="HisRS/HisZ"/>
</dbReference>
<dbReference type="InterPro" id="IPR033656">
    <property type="entry name" value="HisRS_anticodon"/>
</dbReference>
<dbReference type="NCBIfam" id="TIGR00442">
    <property type="entry name" value="hisS"/>
    <property type="match status" value="1"/>
</dbReference>
<dbReference type="PANTHER" id="PTHR11476:SF7">
    <property type="entry name" value="HISTIDINE--TRNA LIGASE"/>
    <property type="match status" value="1"/>
</dbReference>
<dbReference type="PANTHER" id="PTHR11476">
    <property type="entry name" value="HISTIDYL-TRNA SYNTHETASE"/>
    <property type="match status" value="1"/>
</dbReference>
<dbReference type="Pfam" id="PF03129">
    <property type="entry name" value="HGTP_anticodon"/>
    <property type="match status" value="1"/>
</dbReference>
<dbReference type="Pfam" id="PF13393">
    <property type="entry name" value="tRNA-synt_His"/>
    <property type="match status" value="1"/>
</dbReference>
<dbReference type="PIRSF" id="PIRSF001549">
    <property type="entry name" value="His-tRNA_synth"/>
    <property type="match status" value="1"/>
</dbReference>
<dbReference type="SUPFAM" id="SSF52954">
    <property type="entry name" value="Class II aaRS ABD-related"/>
    <property type="match status" value="1"/>
</dbReference>
<dbReference type="SUPFAM" id="SSF55681">
    <property type="entry name" value="Class II aaRS and biotin synthetases"/>
    <property type="match status" value="1"/>
</dbReference>
<dbReference type="PROSITE" id="PS50862">
    <property type="entry name" value="AA_TRNA_LIGASE_II"/>
    <property type="match status" value="1"/>
</dbReference>
<comment type="function">
    <text evidence="3 5">Catalyzes the aminoacylation of histidyl-tRNA in both the cytoplasm and the mitochondrion.</text>
</comment>
<comment type="catalytic activity">
    <reaction>
        <text>tRNA(His) + L-histidine + ATP = L-histidyl-tRNA(His) + AMP + diphosphate + H(+)</text>
        <dbReference type="Rhea" id="RHEA:17313"/>
        <dbReference type="Rhea" id="RHEA-COMP:9665"/>
        <dbReference type="Rhea" id="RHEA-COMP:9689"/>
        <dbReference type="ChEBI" id="CHEBI:15378"/>
        <dbReference type="ChEBI" id="CHEBI:30616"/>
        <dbReference type="ChEBI" id="CHEBI:33019"/>
        <dbReference type="ChEBI" id="CHEBI:57595"/>
        <dbReference type="ChEBI" id="CHEBI:78442"/>
        <dbReference type="ChEBI" id="CHEBI:78527"/>
        <dbReference type="ChEBI" id="CHEBI:456215"/>
        <dbReference type="EC" id="6.1.1.21"/>
    </reaction>
</comment>
<comment type="subcellular location">
    <molecule>Isoform Cytoplasmic</molecule>
    <subcellularLocation>
        <location>Cytoplasm</location>
    </subcellularLocation>
</comment>
<comment type="subcellular location">
    <molecule>Isoform Mitochondrial</molecule>
    <subcellularLocation>
        <location>Mitochondrion</location>
    </subcellularLocation>
</comment>
<comment type="alternative products">
    <event type="alternative initiation"/>
    <isoform>
        <id>P07263-1</id>
        <name>Mitochondrial</name>
        <sequence type="displayed"/>
    </isoform>
    <isoform>
        <id>P07263-2</id>
        <name>Cytoplasmic</name>
        <sequence type="described" ref="VSP_018907"/>
    </isoform>
</comment>
<comment type="disruption phenotype">
    <text evidence="4">Lethal.</text>
</comment>
<comment type="miscellaneous">
    <text evidence="2">Present with 26800 molecules/cell in log phase SD medium.</text>
</comment>
<comment type="miscellaneous">
    <molecule>Isoform Cytoplasmic</molecule>
    <text evidence="6">Produced by alternative initiation at Met-21 of isoform Mitochondrial.</text>
</comment>
<comment type="similarity">
    <text evidence="6">Belongs to the class-II aminoacyl-tRNA synthetase family.</text>
</comment>
<keyword id="KW-0024">Alternative initiation</keyword>
<keyword id="KW-0030">Aminoacyl-tRNA synthetase</keyword>
<keyword id="KW-0067">ATP-binding</keyword>
<keyword id="KW-0963">Cytoplasm</keyword>
<keyword id="KW-0436">Ligase</keyword>
<keyword id="KW-0496">Mitochondrion</keyword>
<keyword id="KW-0547">Nucleotide-binding</keyword>
<keyword id="KW-0648">Protein biosynthesis</keyword>
<keyword id="KW-1185">Reference proteome</keyword>
<keyword id="KW-0809">Transit peptide</keyword>